<comment type="function">
    <text evidence="1">Deubiquitinating enzyme involved in various processes such as centrosome duplication, cellular migration and beta-2 adrenergic receptor/ADRB2 recycling. Involved in regulation of centrosome duplication by mediating deubiquitination of ccp110 in S and G2/M phase, leading to stabilize ccp110 during the period which centrioles duplicate and elongate. Involved in cell migration via its interaction with intracellular domain of robo1, leading to regulate the Slit signaling. Plays a role in commissural axon guidance cross the ventral midline of the neural tube in a Slit-dependent manner, possibly by mediating the deubiquitination of robo1. Acts as a regulator of G-protein coupled receptor (GPCR) signaling by mediating the deubiquitination of beta-arrestins (arrb1 and arrb2) and beta-2 adrenergic receptor (adrb2). Deubiquitinates dio2, thereby regulating thyroid hormone regulation. Mediates deubiquitination of both 'Lys-48'- and 'Lys-63'-linked polyubiquitin chains (By similarity).</text>
</comment>
<comment type="catalytic activity">
    <reaction>
        <text>Thiol-dependent hydrolysis of ester, thioester, amide, peptide and isopeptide bonds formed by the C-terminal Gly of ubiquitin (a 76-residue protein attached to proteins as an intracellular targeting signal).</text>
        <dbReference type="EC" id="3.4.19.12"/>
    </reaction>
</comment>
<comment type="subcellular location">
    <subcellularLocation>
        <location evidence="2">Cytoplasm</location>
        <location evidence="2">Perinuclear region</location>
    </subcellularLocation>
    <subcellularLocation>
        <location evidence="2">Cytoplasm</location>
        <location evidence="2">Cytoskeleton</location>
        <location evidence="2">Microtubule organizing center</location>
        <location evidence="2">Centrosome</location>
    </subcellularLocation>
    <text evidence="2">Associates with centrosomes predominantly in S and G2 phases but less in G1 phase (By similarity).</text>
</comment>
<comment type="domain">
    <text evidence="1">The UBP-type zinc finger binds 3 zinc ions. However, it does not bind ubiquitin, probably because the conserved Arg in position 55 is replaced by a Glu residue (By similarity).</text>
</comment>
<comment type="similarity">
    <text evidence="8">Belongs to the peptidase C19 family. USP20/USP33 subfamily.</text>
</comment>
<proteinExistence type="evidence at transcript level"/>
<accession>Q28CN3</accession>
<accession>B7ZU27</accession>
<accession>F7EIJ9</accession>
<keyword id="KW-0963">Cytoplasm</keyword>
<keyword id="KW-0206">Cytoskeleton</keyword>
<keyword id="KW-0254">Endocytosis</keyword>
<keyword id="KW-0378">Hydrolase</keyword>
<keyword id="KW-0479">Metal-binding</keyword>
<keyword id="KW-0645">Protease</keyword>
<keyword id="KW-1185">Reference proteome</keyword>
<keyword id="KW-0677">Repeat</keyword>
<keyword id="KW-0788">Thiol protease</keyword>
<keyword id="KW-0833">Ubl conjugation pathway</keyword>
<keyword id="KW-0862">Zinc</keyword>
<keyword id="KW-0863">Zinc-finger</keyword>
<reference key="1">
    <citation type="submission" date="2006-10" db="EMBL/GenBank/DDBJ databases">
        <authorList>
            <consortium name="Sanger Xenopus tropicalis EST/cDNA project"/>
        </authorList>
    </citation>
    <scope>NUCLEOTIDE SEQUENCE [LARGE SCALE MRNA]</scope>
    <source>
        <tissue>Egg</tissue>
    </source>
</reference>
<reference key="2">
    <citation type="journal article" date="2010" name="Science">
        <title>The genome of the Western clawed frog Xenopus tropicalis.</title>
        <authorList>
            <person name="Hellsten U."/>
            <person name="Harland R.M."/>
            <person name="Gilchrist M.J."/>
            <person name="Hendrix D."/>
            <person name="Jurka J."/>
            <person name="Kapitonov V."/>
            <person name="Ovcharenko I."/>
            <person name="Putnam N.H."/>
            <person name="Shu S."/>
            <person name="Taher L."/>
            <person name="Blitz I.L."/>
            <person name="Blumberg B."/>
            <person name="Dichmann D.S."/>
            <person name="Dubchak I."/>
            <person name="Amaya E."/>
            <person name="Detter J.C."/>
            <person name="Fletcher R."/>
            <person name="Gerhard D.S."/>
            <person name="Goodstein D."/>
            <person name="Graves T."/>
            <person name="Grigoriev I.V."/>
            <person name="Grimwood J."/>
            <person name="Kawashima T."/>
            <person name="Lindquist E."/>
            <person name="Lucas S.M."/>
            <person name="Mead P.E."/>
            <person name="Mitros T."/>
            <person name="Ogino H."/>
            <person name="Ohta Y."/>
            <person name="Poliakov A.V."/>
            <person name="Pollet N."/>
            <person name="Robert J."/>
            <person name="Salamov A."/>
            <person name="Sater A.K."/>
            <person name="Schmutz J."/>
            <person name="Terry A."/>
            <person name="Vize P.D."/>
            <person name="Warren W.C."/>
            <person name="Wells D."/>
            <person name="Wills A."/>
            <person name="Wilson R.K."/>
            <person name="Zimmerman L.B."/>
            <person name="Zorn A.M."/>
            <person name="Grainger R."/>
            <person name="Grammer T."/>
            <person name="Khokha M.K."/>
            <person name="Richardson P.M."/>
            <person name="Rokhsar D.S."/>
        </authorList>
    </citation>
    <scope>NUCLEOTIDE SEQUENCE [LARGE SCALE GENOMIC DNA]</scope>
</reference>
<reference key="3">
    <citation type="submission" date="2008-11" db="EMBL/GenBank/DDBJ databases">
        <authorList>
            <consortium name="NIH - Xenopus Gene Collection (XGC) project"/>
        </authorList>
    </citation>
    <scope>NUCLEOTIDE SEQUENCE [LARGE SCALE MRNA]</scope>
    <source>
        <tissue>Neurula</tissue>
    </source>
</reference>
<gene>
    <name type="primary">usp33</name>
    <name type="ORF">TEgg041n23.1</name>
</gene>
<sequence length="892" mass="100733">MSSLVCDCPHLESVGEVTKEELIKKSHGSCQDCRVRGPNLWACLENGCSYVGCGESHVDHSTLHSQDTKHCLTVNLTTLRVWCYTCSKEVFLDRKLSTQPTSAKLQDSHTQESKMSSSLTLKIPAAVVSENLDIELEEEDELKTRGLTGLKNIGNTCYMNAALQALSNCPPLTHYFLDCGGLARTDKKPALCKSYQKLMSDIWHKNRPGFVIPTNLFQGIKSVNPTFRGYSQQDAQEFLRCLMDVLHEELKEQIVEVEEDAQTGIVEENLDEDKSQSDNDFHSCDSGSSSDHAESESRKLSEELTESTMLIHEDQKDVESCKTWQKEKKFSNNLNQNHFLQDFEKNIQSTIEESECLKQETVKVQIQSKAADFTAEVNMNDLPTSQTPLLNEGATTHLSSSPPKPGAVWTGHKKVPGLCPAKKRKQKKYHSVIADIFDGTIVSSVQCLTCDRVSVTLETFQDLSLPIPGKEDLAKLHSSSHQSSLVKAGSCGEAYAPQGWIAFFLEYFKSWFWGPTVTLQDCLAAFFARDELKGDNMYSCEKCKKLRNGVKFCKVQKFPEILCIHLKRFRHELMFSTKIGTHVSFPLEGLDLQPFLAKDSPSQIVTYDLLSVICHHGTASSGHYIAYCRNNLNNLWYEFDDQSVTEVSEATVQNAEAYVLFYRKASEEAQKERRRVSCLLNIMEPSLLQFYISRQWLNKFKTFAEPGPISNNDFLCIHGGVPPRKASFIEDLVVMLPQNIWDYLYSRYGGGPAVNHLYVCYTCQTEMEKIEKRRKMELETFIRLNKAFQEEESPAVIYCISMQWFREWEGFVKSKDSDPPGPIDNTKIAAAKCGHITLRQGADSGQISEETWLFLQSIYGGGPEITLRQNVTLAESEGGHAEEKIDVETRNI</sequence>
<organism>
    <name type="scientific">Xenopus tropicalis</name>
    <name type="common">Western clawed frog</name>
    <name type="synonym">Silurana tropicalis</name>
    <dbReference type="NCBI Taxonomy" id="8364"/>
    <lineage>
        <taxon>Eukaryota</taxon>
        <taxon>Metazoa</taxon>
        <taxon>Chordata</taxon>
        <taxon>Craniata</taxon>
        <taxon>Vertebrata</taxon>
        <taxon>Euteleostomi</taxon>
        <taxon>Amphibia</taxon>
        <taxon>Batrachia</taxon>
        <taxon>Anura</taxon>
        <taxon>Pipoidea</taxon>
        <taxon>Pipidae</taxon>
        <taxon>Xenopodinae</taxon>
        <taxon>Xenopus</taxon>
        <taxon>Silurana</taxon>
    </lineage>
</organism>
<feature type="chain" id="PRO_0000390427" description="Ubiquitin carboxyl-terminal hydrolase 33">
    <location>
        <begin position="1"/>
        <end position="892"/>
    </location>
</feature>
<feature type="domain" description="USP">
    <location>
        <begin position="148"/>
        <end position="665"/>
    </location>
</feature>
<feature type="domain" description="DUSP 1" evidence="4">
    <location>
        <begin position="667"/>
        <end position="760"/>
    </location>
</feature>
<feature type="domain" description="DUSP 2" evidence="4">
    <location>
        <begin position="768"/>
        <end position="871"/>
    </location>
</feature>
<feature type="zinc finger region" description="UBP-type" evidence="3">
    <location>
        <begin position="6"/>
        <end position="109"/>
    </location>
</feature>
<feature type="region of interest" description="Disordered" evidence="7">
    <location>
        <begin position="268"/>
        <end position="311"/>
    </location>
</feature>
<feature type="compositionally biased region" description="Basic and acidic residues" evidence="7">
    <location>
        <begin position="272"/>
        <end position="283"/>
    </location>
</feature>
<feature type="compositionally biased region" description="Basic and acidic residues" evidence="7">
    <location>
        <begin position="291"/>
        <end position="302"/>
    </location>
</feature>
<feature type="active site" description="Nucleophile" evidence="5 6">
    <location>
        <position position="157"/>
    </location>
</feature>
<feature type="active site" description="Proton acceptor" evidence="5 6">
    <location>
        <position position="623"/>
    </location>
</feature>
<feature type="binding site" evidence="3">
    <location>
        <position position="8"/>
    </location>
    <ligand>
        <name>Zn(2+)</name>
        <dbReference type="ChEBI" id="CHEBI:29105"/>
        <label>1</label>
    </ligand>
</feature>
<feature type="binding site" evidence="3">
    <location>
        <position position="10"/>
    </location>
    <ligand>
        <name>Zn(2+)</name>
        <dbReference type="ChEBI" id="CHEBI:29105"/>
        <label>1</label>
    </ligand>
</feature>
<feature type="binding site" evidence="3">
    <location>
        <position position="30"/>
    </location>
    <ligand>
        <name>Zn(2+)</name>
        <dbReference type="ChEBI" id="CHEBI:29105"/>
        <label>2</label>
    </ligand>
</feature>
<feature type="binding site" evidence="3">
    <location>
        <position position="33"/>
    </location>
    <ligand>
        <name>Zn(2+)</name>
        <dbReference type="ChEBI" id="CHEBI:29105"/>
        <label>2</label>
    </ligand>
</feature>
<feature type="binding site" evidence="3">
    <location>
        <position position="43"/>
    </location>
    <ligand>
        <name>Zn(2+)</name>
        <dbReference type="ChEBI" id="CHEBI:29105"/>
        <label>3</label>
    </ligand>
</feature>
<feature type="binding site" evidence="3">
    <location>
        <position position="48"/>
    </location>
    <ligand>
        <name>Zn(2+)</name>
        <dbReference type="ChEBI" id="CHEBI:29105"/>
        <label>3</label>
    </ligand>
</feature>
<feature type="binding site" evidence="3">
    <location>
        <position position="53"/>
    </location>
    <ligand>
        <name>Zn(2+)</name>
        <dbReference type="ChEBI" id="CHEBI:29105"/>
        <label>2</label>
    </ligand>
</feature>
<feature type="binding site" evidence="3">
    <location>
        <position position="60"/>
    </location>
    <ligand>
        <name>Zn(2+)</name>
        <dbReference type="ChEBI" id="CHEBI:29105"/>
        <label>2</label>
    </ligand>
</feature>
<feature type="binding site" evidence="3">
    <location>
        <position position="64"/>
    </location>
    <ligand>
        <name>Zn(2+)</name>
        <dbReference type="ChEBI" id="CHEBI:29105"/>
        <label>3</label>
    </ligand>
</feature>
<feature type="binding site" evidence="3">
    <location>
        <position position="70"/>
    </location>
    <ligand>
        <name>Zn(2+)</name>
        <dbReference type="ChEBI" id="CHEBI:29105"/>
        <label>3</label>
    </ligand>
</feature>
<feature type="binding site" evidence="3">
    <location>
        <position position="83"/>
    </location>
    <ligand>
        <name>Zn(2+)</name>
        <dbReference type="ChEBI" id="CHEBI:29105"/>
        <label>1</label>
    </ligand>
</feature>
<feature type="binding site" evidence="3">
    <location>
        <position position="86"/>
    </location>
    <ligand>
        <name>Zn(2+)</name>
        <dbReference type="ChEBI" id="CHEBI:29105"/>
        <label>1</label>
    </ligand>
</feature>
<feature type="sequence conflict" description="In Ref. 1; CAJ82183." evidence="8" ref="1">
    <original>S</original>
    <variation>I</variation>
    <location>
        <position position="320"/>
    </location>
</feature>
<feature type="sequence conflict" description="In Ref. 3; AAI71081." evidence="8" ref="3">
    <original>K</original>
    <variation>I</variation>
    <location>
        <position position="671"/>
    </location>
</feature>
<evidence type="ECO:0000250" key="1"/>
<evidence type="ECO:0000250" key="2">
    <source>
        <dbReference type="UniProtKB" id="Q8TEY7"/>
    </source>
</evidence>
<evidence type="ECO:0000255" key="3">
    <source>
        <dbReference type="PROSITE-ProRule" id="PRU00502"/>
    </source>
</evidence>
<evidence type="ECO:0000255" key="4">
    <source>
        <dbReference type="PROSITE-ProRule" id="PRU00613"/>
    </source>
</evidence>
<evidence type="ECO:0000255" key="5">
    <source>
        <dbReference type="PROSITE-ProRule" id="PRU10092"/>
    </source>
</evidence>
<evidence type="ECO:0000255" key="6">
    <source>
        <dbReference type="PROSITE-ProRule" id="PRU10093"/>
    </source>
</evidence>
<evidence type="ECO:0000256" key="7">
    <source>
        <dbReference type="SAM" id="MobiDB-lite"/>
    </source>
</evidence>
<evidence type="ECO:0000305" key="8"/>
<protein>
    <recommendedName>
        <fullName>Ubiquitin carboxyl-terminal hydrolase 33</fullName>
        <ecNumber>3.4.19.12</ecNumber>
    </recommendedName>
    <alternativeName>
        <fullName>Deubiquitinating enzyme 33</fullName>
    </alternativeName>
    <alternativeName>
        <fullName>Ubiquitin thioesterase 33</fullName>
    </alternativeName>
    <alternativeName>
        <fullName>Ubiquitin-specific-processing protease 33</fullName>
    </alternativeName>
</protein>
<name>UBP33_XENTR</name>
<dbReference type="EC" id="3.4.19.12"/>
<dbReference type="EMBL" id="CR926290">
    <property type="protein sequence ID" value="CAJ82183.1"/>
    <property type="molecule type" value="mRNA"/>
</dbReference>
<dbReference type="EMBL" id="AAMC01095352">
    <property type="status" value="NOT_ANNOTATED_CDS"/>
    <property type="molecule type" value="Genomic_DNA"/>
</dbReference>
<dbReference type="EMBL" id="AAMC01095353">
    <property type="status" value="NOT_ANNOTATED_CDS"/>
    <property type="molecule type" value="Genomic_DNA"/>
</dbReference>
<dbReference type="EMBL" id="BC171081">
    <property type="protein sequence ID" value="AAI71081.1"/>
    <property type="molecule type" value="mRNA"/>
</dbReference>
<dbReference type="RefSeq" id="NP_001016228.1">
    <property type="nucleotide sequence ID" value="NM_001016228.2"/>
</dbReference>
<dbReference type="RefSeq" id="XP_012816527.1">
    <property type="nucleotide sequence ID" value="XM_012961073.3"/>
</dbReference>
<dbReference type="FunCoup" id="Q28CN3">
    <property type="interactions" value="3131"/>
</dbReference>
<dbReference type="STRING" id="8364.ENSXETP00000047919"/>
<dbReference type="MEROPS" id="C19.037"/>
<dbReference type="PaxDb" id="8364-ENSXETP00000028749"/>
<dbReference type="GeneID" id="548982"/>
<dbReference type="KEGG" id="xtr:548982"/>
<dbReference type="AGR" id="Xenbase:XB-GENE-1016674"/>
<dbReference type="CTD" id="23032"/>
<dbReference type="Xenbase" id="XB-GENE-1016674">
    <property type="gene designation" value="usp33"/>
</dbReference>
<dbReference type="eggNOG" id="KOG1870">
    <property type="taxonomic scope" value="Eukaryota"/>
</dbReference>
<dbReference type="HOGENOM" id="CLU_004896_0_0_1"/>
<dbReference type="InParanoid" id="Q28CN3"/>
<dbReference type="OrthoDB" id="73004at2759"/>
<dbReference type="PhylomeDB" id="Q28CN3"/>
<dbReference type="TreeFam" id="TF352179"/>
<dbReference type="Reactome" id="R-XTR-5689880">
    <property type="pathway name" value="Ub-specific processing proteases"/>
</dbReference>
<dbReference type="Proteomes" id="UP000008143">
    <property type="component" value="Chromosome 4"/>
</dbReference>
<dbReference type="Bgee" id="ENSXETG00000013118">
    <property type="expression patterns" value="Expressed in testis and 15 other cell types or tissues"/>
</dbReference>
<dbReference type="ExpressionAtlas" id="Q28CN3">
    <property type="expression patterns" value="baseline"/>
</dbReference>
<dbReference type="GO" id="GO:0005813">
    <property type="term" value="C:centrosome"/>
    <property type="evidence" value="ECO:0000250"/>
    <property type="project" value="UniProtKB"/>
</dbReference>
<dbReference type="GO" id="GO:0048471">
    <property type="term" value="C:perinuclear region of cytoplasm"/>
    <property type="evidence" value="ECO:0007669"/>
    <property type="project" value="UniProtKB-SubCell"/>
</dbReference>
<dbReference type="GO" id="GO:0004843">
    <property type="term" value="F:cysteine-type deubiquitinase activity"/>
    <property type="evidence" value="ECO:0000250"/>
    <property type="project" value="UniProtKB"/>
</dbReference>
<dbReference type="GO" id="GO:0004197">
    <property type="term" value="F:cysteine-type endopeptidase activity"/>
    <property type="evidence" value="ECO:0000250"/>
    <property type="project" value="UniProtKB"/>
</dbReference>
<dbReference type="GO" id="GO:0008270">
    <property type="term" value="F:zinc ion binding"/>
    <property type="evidence" value="ECO:0000250"/>
    <property type="project" value="UniProtKB"/>
</dbReference>
<dbReference type="GO" id="GO:0007411">
    <property type="term" value="P:axon guidance"/>
    <property type="evidence" value="ECO:0000250"/>
    <property type="project" value="UniProtKB"/>
</dbReference>
<dbReference type="GO" id="GO:0016477">
    <property type="term" value="P:cell migration"/>
    <property type="evidence" value="ECO:0000250"/>
    <property type="project" value="UniProtKB"/>
</dbReference>
<dbReference type="GO" id="GO:0051298">
    <property type="term" value="P:centrosome duplication"/>
    <property type="evidence" value="ECO:0000250"/>
    <property type="project" value="UniProtKB"/>
</dbReference>
<dbReference type="GO" id="GO:0006897">
    <property type="term" value="P:endocytosis"/>
    <property type="evidence" value="ECO:0007669"/>
    <property type="project" value="UniProtKB-KW"/>
</dbReference>
<dbReference type="GO" id="GO:0016579">
    <property type="term" value="P:protein deubiquitination"/>
    <property type="evidence" value="ECO:0000250"/>
    <property type="project" value="UniProtKB"/>
</dbReference>
<dbReference type="GO" id="GO:0071108">
    <property type="term" value="P:protein K48-linked deubiquitination"/>
    <property type="evidence" value="ECO:0000250"/>
    <property type="project" value="UniProtKB"/>
</dbReference>
<dbReference type="GO" id="GO:0070536">
    <property type="term" value="P:protein K63-linked deubiquitination"/>
    <property type="evidence" value="ECO:0000250"/>
    <property type="project" value="UniProtKB"/>
</dbReference>
<dbReference type="GO" id="GO:0006508">
    <property type="term" value="P:proteolysis"/>
    <property type="evidence" value="ECO:0007669"/>
    <property type="project" value="UniProtKB-KW"/>
</dbReference>
<dbReference type="GO" id="GO:0008277">
    <property type="term" value="P:regulation of G protein-coupled receptor signaling pathway"/>
    <property type="evidence" value="ECO:0000250"/>
    <property type="project" value="UniProtKB"/>
</dbReference>
<dbReference type="CDD" id="cd02674">
    <property type="entry name" value="Peptidase_C19R"/>
    <property type="match status" value="1"/>
</dbReference>
<dbReference type="FunFam" id="3.30.2230.10:FF:000001">
    <property type="entry name" value="Ubiquitinyl hydrolase 1"/>
    <property type="match status" value="1"/>
</dbReference>
<dbReference type="FunFam" id="3.30.2230.10:FF:000002">
    <property type="entry name" value="Ubiquitinyl hydrolase 1"/>
    <property type="match status" value="1"/>
</dbReference>
<dbReference type="FunFam" id="3.30.40.10:FF:000065">
    <property type="entry name" value="Ubiquitinyl hydrolase 1"/>
    <property type="match status" value="1"/>
</dbReference>
<dbReference type="FunFam" id="3.90.70.10:FF:000056">
    <property type="entry name" value="Ubiquitinyl hydrolase 1"/>
    <property type="match status" value="1"/>
</dbReference>
<dbReference type="Gene3D" id="3.90.70.10">
    <property type="entry name" value="Cysteine proteinases"/>
    <property type="match status" value="2"/>
</dbReference>
<dbReference type="Gene3D" id="3.30.2230.10">
    <property type="entry name" value="DUSP-like"/>
    <property type="match status" value="2"/>
</dbReference>
<dbReference type="Gene3D" id="3.30.40.10">
    <property type="entry name" value="Zinc/RING finger domain, C3HC4 (zinc finger)"/>
    <property type="match status" value="1"/>
</dbReference>
<dbReference type="InterPro" id="IPR035927">
    <property type="entry name" value="DUSP-like_sf"/>
</dbReference>
<dbReference type="InterPro" id="IPR038765">
    <property type="entry name" value="Papain-like_cys_pep_sf"/>
</dbReference>
<dbReference type="InterPro" id="IPR006615">
    <property type="entry name" value="Pept_C19_DUSP"/>
</dbReference>
<dbReference type="InterPro" id="IPR001394">
    <property type="entry name" value="Peptidase_C19_UCH"/>
</dbReference>
<dbReference type="InterPro" id="IPR050185">
    <property type="entry name" value="Ub_carboxyl-term_hydrolase"/>
</dbReference>
<dbReference type="InterPro" id="IPR018200">
    <property type="entry name" value="USP_CS"/>
</dbReference>
<dbReference type="InterPro" id="IPR028889">
    <property type="entry name" value="USP_dom"/>
</dbReference>
<dbReference type="InterPro" id="IPR013083">
    <property type="entry name" value="Znf_RING/FYVE/PHD"/>
</dbReference>
<dbReference type="InterPro" id="IPR001607">
    <property type="entry name" value="Znf_UBP"/>
</dbReference>
<dbReference type="PANTHER" id="PTHR21646">
    <property type="entry name" value="UBIQUITIN CARBOXYL-TERMINAL HYDROLASE"/>
    <property type="match status" value="1"/>
</dbReference>
<dbReference type="PANTHER" id="PTHR21646:SF32">
    <property type="entry name" value="UBIQUITIN CARBOXYL-TERMINAL HYDROLASE 33"/>
    <property type="match status" value="1"/>
</dbReference>
<dbReference type="Pfam" id="PF06337">
    <property type="entry name" value="DUSP"/>
    <property type="match status" value="2"/>
</dbReference>
<dbReference type="Pfam" id="PF00443">
    <property type="entry name" value="UCH"/>
    <property type="match status" value="1"/>
</dbReference>
<dbReference type="Pfam" id="PF02148">
    <property type="entry name" value="zf-UBP"/>
    <property type="match status" value="1"/>
</dbReference>
<dbReference type="SMART" id="SM00695">
    <property type="entry name" value="DUSP"/>
    <property type="match status" value="2"/>
</dbReference>
<dbReference type="SMART" id="SM00290">
    <property type="entry name" value="ZnF_UBP"/>
    <property type="match status" value="1"/>
</dbReference>
<dbReference type="SUPFAM" id="SSF54001">
    <property type="entry name" value="Cysteine proteinases"/>
    <property type="match status" value="1"/>
</dbReference>
<dbReference type="SUPFAM" id="SSF143791">
    <property type="entry name" value="DUSP-like"/>
    <property type="match status" value="2"/>
</dbReference>
<dbReference type="SUPFAM" id="SSF57850">
    <property type="entry name" value="RING/U-box"/>
    <property type="match status" value="1"/>
</dbReference>
<dbReference type="PROSITE" id="PS51283">
    <property type="entry name" value="DUSP"/>
    <property type="match status" value="2"/>
</dbReference>
<dbReference type="PROSITE" id="PS00972">
    <property type="entry name" value="USP_1"/>
    <property type="match status" value="1"/>
</dbReference>
<dbReference type="PROSITE" id="PS00973">
    <property type="entry name" value="USP_2"/>
    <property type="match status" value="1"/>
</dbReference>
<dbReference type="PROSITE" id="PS50235">
    <property type="entry name" value="USP_3"/>
    <property type="match status" value="1"/>
</dbReference>
<dbReference type="PROSITE" id="PS50271">
    <property type="entry name" value="ZF_UBP"/>
    <property type="match status" value="1"/>
</dbReference>